<sequence length="274" mass="30073">MAIVKCKPTSPGRRHVVKVVNPELHKGKPYAPLLEKLSKSGGRNNNGRITTRHIGGGHKQHYRLVDFKRNKDGIPAVVERLEYDPNRSANIALVLYKDGERRYILAPKGLKAGDQIQSGVDAAIKAGNTLPMRNIPVGSTVHNVEMKPGKGGQLARSAGAYVQIVARDGSYVTLRLRSGEMRKVQADCRATLGEVGNAEHMLRVLGKAGASRWRGIRPTVRGTAMNPVDHPHGGGEGRNFGKHPVTPWGVQTKGKKTRSNKRTDKFIVRRRSKK</sequence>
<name>RL2_YERPG</name>
<feature type="chain" id="PRO_1000141645" description="Large ribosomal subunit protein uL2">
    <location>
        <begin position="1"/>
        <end position="274"/>
    </location>
</feature>
<feature type="region of interest" description="Disordered" evidence="2">
    <location>
        <begin position="221"/>
        <end position="274"/>
    </location>
</feature>
<proteinExistence type="inferred from homology"/>
<accession>A9R8Z9</accession>
<comment type="function">
    <text evidence="1">One of the primary rRNA binding proteins. Required for association of the 30S and 50S subunits to form the 70S ribosome, for tRNA binding and peptide bond formation. It has been suggested to have peptidyltransferase activity; this is somewhat controversial. Makes several contacts with the 16S rRNA in the 70S ribosome.</text>
</comment>
<comment type="subunit">
    <text evidence="1">Part of the 50S ribosomal subunit. Forms a bridge to the 30S subunit in the 70S ribosome.</text>
</comment>
<comment type="similarity">
    <text evidence="1">Belongs to the universal ribosomal protein uL2 family.</text>
</comment>
<protein>
    <recommendedName>
        <fullName evidence="1">Large ribosomal subunit protein uL2</fullName>
    </recommendedName>
    <alternativeName>
        <fullName evidence="3">50S ribosomal protein L2</fullName>
    </alternativeName>
</protein>
<evidence type="ECO:0000255" key="1">
    <source>
        <dbReference type="HAMAP-Rule" id="MF_01320"/>
    </source>
</evidence>
<evidence type="ECO:0000256" key="2">
    <source>
        <dbReference type="SAM" id="MobiDB-lite"/>
    </source>
</evidence>
<evidence type="ECO:0000305" key="3"/>
<organism>
    <name type="scientific">Yersinia pestis bv. Antiqua (strain Angola)</name>
    <dbReference type="NCBI Taxonomy" id="349746"/>
    <lineage>
        <taxon>Bacteria</taxon>
        <taxon>Pseudomonadati</taxon>
        <taxon>Pseudomonadota</taxon>
        <taxon>Gammaproteobacteria</taxon>
        <taxon>Enterobacterales</taxon>
        <taxon>Yersiniaceae</taxon>
        <taxon>Yersinia</taxon>
    </lineage>
</organism>
<gene>
    <name evidence="1" type="primary">rplB</name>
    <name type="ordered locus">YpAngola_A0587</name>
</gene>
<reference key="1">
    <citation type="journal article" date="2010" name="J. Bacteriol.">
        <title>Genome sequence of the deep-rooted Yersinia pestis strain Angola reveals new insights into the evolution and pangenome of the plague bacterium.</title>
        <authorList>
            <person name="Eppinger M."/>
            <person name="Worsham P.L."/>
            <person name="Nikolich M.P."/>
            <person name="Riley D.R."/>
            <person name="Sebastian Y."/>
            <person name="Mou S."/>
            <person name="Achtman M."/>
            <person name="Lindler L.E."/>
            <person name="Ravel J."/>
        </authorList>
    </citation>
    <scope>NUCLEOTIDE SEQUENCE [LARGE SCALE GENOMIC DNA]</scope>
    <source>
        <strain>Angola</strain>
    </source>
</reference>
<keyword id="KW-0687">Ribonucleoprotein</keyword>
<keyword id="KW-0689">Ribosomal protein</keyword>
<keyword id="KW-0694">RNA-binding</keyword>
<keyword id="KW-0699">rRNA-binding</keyword>
<dbReference type="EMBL" id="CP000901">
    <property type="protein sequence ID" value="ABX87738.1"/>
    <property type="molecule type" value="Genomic_DNA"/>
</dbReference>
<dbReference type="RefSeq" id="WP_002213425.1">
    <property type="nucleotide sequence ID" value="NZ_CP009935.1"/>
</dbReference>
<dbReference type="SMR" id="A9R8Z9"/>
<dbReference type="GeneID" id="97454234"/>
<dbReference type="KEGG" id="ypg:YpAngola_A0587"/>
<dbReference type="PATRIC" id="fig|349746.12.peg.1536"/>
<dbReference type="GO" id="GO:0015934">
    <property type="term" value="C:large ribosomal subunit"/>
    <property type="evidence" value="ECO:0007669"/>
    <property type="project" value="InterPro"/>
</dbReference>
<dbReference type="GO" id="GO:0019843">
    <property type="term" value="F:rRNA binding"/>
    <property type="evidence" value="ECO:0007669"/>
    <property type="project" value="UniProtKB-UniRule"/>
</dbReference>
<dbReference type="GO" id="GO:0003735">
    <property type="term" value="F:structural constituent of ribosome"/>
    <property type="evidence" value="ECO:0007669"/>
    <property type="project" value="InterPro"/>
</dbReference>
<dbReference type="GO" id="GO:0016740">
    <property type="term" value="F:transferase activity"/>
    <property type="evidence" value="ECO:0007669"/>
    <property type="project" value="InterPro"/>
</dbReference>
<dbReference type="GO" id="GO:0002181">
    <property type="term" value="P:cytoplasmic translation"/>
    <property type="evidence" value="ECO:0007669"/>
    <property type="project" value="TreeGrafter"/>
</dbReference>
<dbReference type="FunFam" id="2.30.30.30:FF:000001">
    <property type="entry name" value="50S ribosomal protein L2"/>
    <property type="match status" value="1"/>
</dbReference>
<dbReference type="FunFam" id="2.40.50.140:FF:000003">
    <property type="entry name" value="50S ribosomal protein L2"/>
    <property type="match status" value="1"/>
</dbReference>
<dbReference type="FunFam" id="4.10.950.10:FF:000001">
    <property type="entry name" value="50S ribosomal protein L2"/>
    <property type="match status" value="1"/>
</dbReference>
<dbReference type="Gene3D" id="2.30.30.30">
    <property type="match status" value="1"/>
</dbReference>
<dbReference type="Gene3D" id="2.40.50.140">
    <property type="entry name" value="Nucleic acid-binding proteins"/>
    <property type="match status" value="1"/>
</dbReference>
<dbReference type="Gene3D" id="4.10.950.10">
    <property type="entry name" value="Ribosomal protein L2, domain 3"/>
    <property type="match status" value="1"/>
</dbReference>
<dbReference type="HAMAP" id="MF_01320_B">
    <property type="entry name" value="Ribosomal_uL2_B"/>
    <property type="match status" value="1"/>
</dbReference>
<dbReference type="InterPro" id="IPR012340">
    <property type="entry name" value="NA-bd_OB-fold"/>
</dbReference>
<dbReference type="InterPro" id="IPR014722">
    <property type="entry name" value="Rib_uL2_dom2"/>
</dbReference>
<dbReference type="InterPro" id="IPR002171">
    <property type="entry name" value="Ribosomal_uL2"/>
</dbReference>
<dbReference type="InterPro" id="IPR005880">
    <property type="entry name" value="Ribosomal_uL2_bac/org-type"/>
</dbReference>
<dbReference type="InterPro" id="IPR022669">
    <property type="entry name" value="Ribosomal_uL2_C"/>
</dbReference>
<dbReference type="InterPro" id="IPR022671">
    <property type="entry name" value="Ribosomal_uL2_CS"/>
</dbReference>
<dbReference type="InterPro" id="IPR014726">
    <property type="entry name" value="Ribosomal_uL2_dom3"/>
</dbReference>
<dbReference type="InterPro" id="IPR022666">
    <property type="entry name" value="Ribosomal_uL2_RNA-bd_dom"/>
</dbReference>
<dbReference type="InterPro" id="IPR008991">
    <property type="entry name" value="Translation_prot_SH3-like_sf"/>
</dbReference>
<dbReference type="NCBIfam" id="TIGR01171">
    <property type="entry name" value="rplB_bact"/>
    <property type="match status" value="1"/>
</dbReference>
<dbReference type="PANTHER" id="PTHR13691:SF5">
    <property type="entry name" value="LARGE RIBOSOMAL SUBUNIT PROTEIN UL2M"/>
    <property type="match status" value="1"/>
</dbReference>
<dbReference type="PANTHER" id="PTHR13691">
    <property type="entry name" value="RIBOSOMAL PROTEIN L2"/>
    <property type="match status" value="1"/>
</dbReference>
<dbReference type="Pfam" id="PF00181">
    <property type="entry name" value="Ribosomal_L2"/>
    <property type="match status" value="1"/>
</dbReference>
<dbReference type="Pfam" id="PF03947">
    <property type="entry name" value="Ribosomal_L2_C"/>
    <property type="match status" value="1"/>
</dbReference>
<dbReference type="PIRSF" id="PIRSF002158">
    <property type="entry name" value="Ribosomal_L2"/>
    <property type="match status" value="1"/>
</dbReference>
<dbReference type="SMART" id="SM01383">
    <property type="entry name" value="Ribosomal_L2"/>
    <property type="match status" value="1"/>
</dbReference>
<dbReference type="SMART" id="SM01382">
    <property type="entry name" value="Ribosomal_L2_C"/>
    <property type="match status" value="1"/>
</dbReference>
<dbReference type="SUPFAM" id="SSF50249">
    <property type="entry name" value="Nucleic acid-binding proteins"/>
    <property type="match status" value="1"/>
</dbReference>
<dbReference type="SUPFAM" id="SSF50104">
    <property type="entry name" value="Translation proteins SH3-like domain"/>
    <property type="match status" value="1"/>
</dbReference>
<dbReference type="PROSITE" id="PS00467">
    <property type="entry name" value="RIBOSOMAL_L2"/>
    <property type="match status" value="1"/>
</dbReference>